<protein>
    <recommendedName>
        <fullName>Rab proteins geranylgeranyltransferase component A 1</fullName>
    </recommendedName>
    <alternativeName>
        <fullName>Choroideremia protein</fullName>
    </alternativeName>
    <alternativeName>
        <fullName>Rab escort protein 1</fullName>
        <shortName>REP-1</shortName>
    </alternativeName>
    <alternativeName>
        <fullName>TCD protein</fullName>
    </alternativeName>
</protein>
<name>RAE1_HUMAN</name>
<evidence type="ECO:0000250" key="1">
    <source>
        <dbReference type="UniProtKB" id="P37727"/>
    </source>
</evidence>
<evidence type="ECO:0000256" key="2">
    <source>
        <dbReference type="SAM" id="MobiDB-lite"/>
    </source>
</evidence>
<evidence type="ECO:0000269" key="3">
    <source>
    </source>
</evidence>
<evidence type="ECO:0000269" key="4">
    <source>
    </source>
</evidence>
<evidence type="ECO:0000269" key="5">
    <source>
    </source>
</evidence>
<evidence type="ECO:0000269" key="6">
    <source>
    </source>
</evidence>
<evidence type="ECO:0000269" key="7">
    <source>
    </source>
</evidence>
<evidence type="ECO:0000269" key="8">
    <source>
    </source>
</evidence>
<evidence type="ECO:0000269" key="9">
    <source>
    </source>
</evidence>
<evidence type="ECO:0000303" key="10">
    <source>
    </source>
</evidence>
<evidence type="ECO:0000305" key="11"/>
<comment type="function">
    <text evidence="3 9">Substrate-binding subunit of the Rab geranylgeranyltransferase (GGTase) complex. Binds unprenylated Rab proteins and presents the substrate peptide to the catalytic component B composed of RABGGTA and RABGGTB, and remains bound to it after the geranylgeranyl transfer reaction. The component A is thought to be regenerated by transferring its prenylated Rab back to the donor membrane. Besides, a pre-formed complex consisting of CHM and the Rab GGTase dimer (RGGT or component B) can bind to and prenylate Rab proteins; this alternative pathway is proposed to be the predominant pathway for Rab protein geranylgeranylation.</text>
</comment>
<comment type="subunit">
    <text evidence="1 3 5 6 7 9">Monomer (By similarity). Heterotrimer composed of RABGGTA, RABGGTB and CHM; within this trimer, RABGGTA and RABGGTB form the catalytic component B, while CHM (component A) mediates Rab protein binding (PubMed:21905166). Can associate with the Rab GGTase dimer (RGGT or component B) prior to Rab protein binding; the association is stabilized by geranylgeranyl pyrophosphate (GGpp). The CHM:RGGT:Rab complex is destabilized by GGpp (PubMed:18532927). Interacts with RAB1A, RAB1B, RAB5A, RAB7A and RAB27A and mediates their prenylation (PubMed:7957092). Interacts with the non-phosphorylated forms of RAB3A, RAB3B, RAB3C, RAB3D, RAB5B, RAB5C, RAB8A, RAB8B, RAB10, RAB12, RAB35, and RAB43 (PubMed:26824392, PubMed:29125462).</text>
</comment>
<comment type="interaction">
    <interactant intactId="EBI-2515129">
        <id>P24386</id>
    </interactant>
    <interactant intactId="EBI-9104196">
        <id>Q92696</id>
        <label>RABGGTA</label>
    </interactant>
    <organismsDiffer>false</organismsDiffer>
    <experiments>6</experiments>
</comment>
<comment type="subcellular location">
    <subcellularLocation>
        <location evidence="9">Cytoplasm</location>
        <location evidence="9">Cytosol</location>
    </subcellularLocation>
</comment>
<comment type="alternative products">
    <event type="alternative splicing"/>
    <isoform>
        <id>P24386-1</id>
        <name>1</name>
        <sequence type="displayed"/>
    </isoform>
    <isoform>
        <id>P24386-2</id>
        <name>2</name>
        <sequence type="described" ref="VSP_042817 VSP_042818"/>
    </isoform>
</comment>
<comment type="disease" evidence="4 5 8">
    <disease id="DI-01347">
        <name>Choroideremia</name>
        <acronym>CHM</acronym>
        <description>An X-linked recessive disease characterized by a slowly progressive degeneration of the choroid, photoreceptors, and retinal pigment epithelium. Affected males develop night blindness in their teenage years followed by loss of peripheral vision and complete blindness at middle age. Carrier females are generally asymptomatic but funduscopic examination often shows patchy areas of chorioretinal atrophy.</description>
        <dbReference type="MIM" id="303100"/>
    </disease>
    <text>The disease is caused by variants affecting the gene represented in this entry.</text>
</comment>
<comment type="similarity">
    <text evidence="11">Belongs to the Rab GDI family.</text>
</comment>
<comment type="online information" name="Retinal and hearing impairment genetic mutation database choroideremia (Rab escort protein 1) (CHM)">
    <link uri="https://databases.lovd.nl/shared/genes/CHM"/>
    <text>Leiden Open Variation Database (LOVD)</text>
</comment>
<comment type="online information" name="NGRL, Manchester LOVD choroideremia (Rab escort protein 1) (CHM)">
    <link uri="https://secure.ngrl.org.uk/LOVDv.2.0/home.php?select_db=CHM"/>
    <text>Leiden Open Variation Database (LOVD)</text>
</comment>
<accession>P24386</accession>
<accession>A1L4D2</accession>
<accession>O43732</accession>
<proteinExistence type="evidence at protein level"/>
<keyword id="KW-0025">Alternative splicing</keyword>
<keyword id="KW-0963">Cytoplasm</keyword>
<keyword id="KW-0225">Disease variant</keyword>
<keyword id="KW-0343">GTPase activation</keyword>
<keyword id="KW-1267">Proteomics identification</keyword>
<keyword id="KW-1185">Reference proteome</keyword>
<keyword id="KW-0716">Sensory transduction</keyword>
<keyword id="KW-0844">Vision</keyword>
<gene>
    <name type="primary">CHM</name>
    <name type="synonym">REP1</name>
    <name type="synonym">TCD</name>
</gene>
<feature type="chain" id="PRO_0000056686" description="Rab proteins geranylgeranyltransferase component A 1">
    <location>
        <begin position="1"/>
        <end position="653"/>
    </location>
</feature>
<feature type="region of interest" description="Disordered" evidence="2">
    <location>
        <begin position="606"/>
        <end position="653"/>
    </location>
</feature>
<feature type="compositionally biased region" description="Polar residues" evidence="2">
    <location>
        <begin position="623"/>
        <end position="646"/>
    </location>
</feature>
<feature type="splice variant" id="VSP_042817" description="In isoform 2." evidence="10">
    <original>SQDLHE</original>
    <variation>RSTLLL</variation>
    <location>
        <begin position="105"/>
        <end position="110"/>
    </location>
</feature>
<feature type="splice variant" id="VSP_042818" description="In isoform 2." evidence="10">
    <location>
        <begin position="111"/>
        <end position="653"/>
    </location>
</feature>
<feature type="sequence variant" id="VAR_008273" description="In CHM; may affect splicing." evidence="8">
    <original>Q</original>
    <variation>L</variation>
    <location>
        <position position="471"/>
    </location>
</feature>
<feature type="sequence variant" id="VAR_066847" description="In CHM; impairs the interaction with RABGGTA; dbSNP:rs397514603." evidence="5">
    <original>H</original>
    <variation>R</variation>
    <location>
        <position position="507"/>
    </location>
</feature>
<feature type="sequence variant" id="VAR_066848" description="In CHM." evidence="4">
    <original>L</original>
    <variation>P</variation>
    <location>
        <position position="550"/>
    </location>
</feature>
<feature type="mutagenesis site" description="Abolishes prenylation of RAB1A and association with RGGT." evidence="3">
    <original>F</original>
    <variation>L</variation>
    <location>
        <position position="282"/>
    </location>
</feature>
<feature type="mutagenesis site" description="Impairs prenylation of RAB1A and abolishes association with RGGT." evidence="3">
    <original>V</original>
    <variation>F</variation>
    <location>
        <position position="290"/>
    </location>
</feature>
<feature type="sequence conflict" description="In Ref. 5; AAA61032." evidence="11" ref="5">
    <original>AS</original>
    <variation>RA</variation>
    <location>
        <begin position="625"/>
        <end position="626"/>
    </location>
</feature>
<reference key="1">
    <citation type="journal article" date="1994" name="Hum. Mol. Genet.">
        <title>Cloning and characterization of the human choroideremia gene.</title>
        <authorList>
            <person name="van Bokhoven H."/>
            <person name="van den Hurk J.A."/>
            <person name="Bogerd L."/>
            <person name="Philippe C."/>
            <person name="Gilgenkrantz S."/>
            <person name="de Jong P."/>
            <person name="Ropers H.-H."/>
            <person name="Cremers F.P."/>
        </authorList>
    </citation>
    <scope>NUCLEOTIDE SEQUENCE [MRNA] (ISOFORM 1)</scope>
    <source>
        <tissue>Retina</tissue>
    </source>
</reference>
<reference key="2">
    <citation type="journal article" date="2005" name="Nature">
        <title>The DNA sequence of the human X chromosome.</title>
        <authorList>
            <person name="Ross M.T."/>
            <person name="Grafham D.V."/>
            <person name="Coffey A.J."/>
            <person name="Scherer S."/>
            <person name="McLay K."/>
            <person name="Muzny D."/>
            <person name="Platzer M."/>
            <person name="Howell G.R."/>
            <person name="Burrows C."/>
            <person name="Bird C.P."/>
            <person name="Frankish A."/>
            <person name="Lovell F.L."/>
            <person name="Howe K.L."/>
            <person name="Ashurst J.L."/>
            <person name="Fulton R.S."/>
            <person name="Sudbrak R."/>
            <person name="Wen G."/>
            <person name="Jones M.C."/>
            <person name="Hurles M.E."/>
            <person name="Andrews T.D."/>
            <person name="Scott C.E."/>
            <person name="Searle S."/>
            <person name="Ramser J."/>
            <person name="Whittaker A."/>
            <person name="Deadman R."/>
            <person name="Carter N.P."/>
            <person name="Hunt S.E."/>
            <person name="Chen R."/>
            <person name="Cree A."/>
            <person name="Gunaratne P."/>
            <person name="Havlak P."/>
            <person name="Hodgson A."/>
            <person name="Metzker M.L."/>
            <person name="Richards S."/>
            <person name="Scott G."/>
            <person name="Steffen D."/>
            <person name="Sodergren E."/>
            <person name="Wheeler D.A."/>
            <person name="Worley K.C."/>
            <person name="Ainscough R."/>
            <person name="Ambrose K.D."/>
            <person name="Ansari-Lari M.A."/>
            <person name="Aradhya S."/>
            <person name="Ashwell R.I."/>
            <person name="Babbage A.K."/>
            <person name="Bagguley C.L."/>
            <person name="Ballabio A."/>
            <person name="Banerjee R."/>
            <person name="Barker G.E."/>
            <person name="Barlow K.F."/>
            <person name="Barrett I.P."/>
            <person name="Bates K.N."/>
            <person name="Beare D.M."/>
            <person name="Beasley H."/>
            <person name="Beasley O."/>
            <person name="Beck A."/>
            <person name="Bethel G."/>
            <person name="Blechschmidt K."/>
            <person name="Brady N."/>
            <person name="Bray-Allen S."/>
            <person name="Bridgeman A.M."/>
            <person name="Brown A.J."/>
            <person name="Brown M.J."/>
            <person name="Bonnin D."/>
            <person name="Bruford E.A."/>
            <person name="Buhay C."/>
            <person name="Burch P."/>
            <person name="Burford D."/>
            <person name="Burgess J."/>
            <person name="Burrill W."/>
            <person name="Burton J."/>
            <person name="Bye J.M."/>
            <person name="Carder C."/>
            <person name="Carrel L."/>
            <person name="Chako J."/>
            <person name="Chapman J.C."/>
            <person name="Chavez D."/>
            <person name="Chen E."/>
            <person name="Chen G."/>
            <person name="Chen Y."/>
            <person name="Chen Z."/>
            <person name="Chinault C."/>
            <person name="Ciccodicola A."/>
            <person name="Clark S.Y."/>
            <person name="Clarke G."/>
            <person name="Clee C.M."/>
            <person name="Clegg S."/>
            <person name="Clerc-Blankenburg K."/>
            <person name="Clifford K."/>
            <person name="Cobley V."/>
            <person name="Cole C.G."/>
            <person name="Conquer J.S."/>
            <person name="Corby N."/>
            <person name="Connor R.E."/>
            <person name="David R."/>
            <person name="Davies J."/>
            <person name="Davis C."/>
            <person name="Davis J."/>
            <person name="Delgado O."/>
            <person name="Deshazo D."/>
            <person name="Dhami P."/>
            <person name="Ding Y."/>
            <person name="Dinh H."/>
            <person name="Dodsworth S."/>
            <person name="Draper H."/>
            <person name="Dugan-Rocha S."/>
            <person name="Dunham A."/>
            <person name="Dunn M."/>
            <person name="Durbin K.J."/>
            <person name="Dutta I."/>
            <person name="Eades T."/>
            <person name="Ellwood M."/>
            <person name="Emery-Cohen A."/>
            <person name="Errington H."/>
            <person name="Evans K.L."/>
            <person name="Faulkner L."/>
            <person name="Francis F."/>
            <person name="Frankland J."/>
            <person name="Fraser A.E."/>
            <person name="Galgoczy P."/>
            <person name="Gilbert J."/>
            <person name="Gill R."/>
            <person name="Gloeckner G."/>
            <person name="Gregory S.G."/>
            <person name="Gribble S."/>
            <person name="Griffiths C."/>
            <person name="Grocock R."/>
            <person name="Gu Y."/>
            <person name="Gwilliam R."/>
            <person name="Hamilton C."/>
            <person name="Hart E.A."/>
            <person name="Hawes A."/>
            <person name="Heath P.D."/>
            <person name="Heitmann K."/>
            <person name="Hennig S."/>
            <person name="Hernandez J."/>
            <person name="Hinzmann B."/>
            <person name="Ho S."/>
            <person name="Hoffs M."/>
            <person name="Howden P.J."/>
            <person name="Huckle E.J."/>
            <person name="Hume J."/>
            <person name="Hunt P.J."/>
            <person name="Hunt A.R."/>
            <person name="Isherwood J."/>
            <person name="Jacob L."/>
            <person name="Johnson D."/>
            <person name="Jones S."/>
            <person name="de Jong P.J."/>
            <person name="Joseph S.S."/>
            <person name="Keenan S."/>
            <person name="Kelly S."/>
            <person name="Kershaw J.K."/>
            <person name="Khan Z."/>
            <person name="Kioschis P."/>
            <person name="Klages S."/>
            <person name="Knights A.J."/>
            <person name="Kosiura A."/>
            <person name="Kovar-Smith C."/>
            <person name="Laird G.K."/>
            <person name="Langford C."/>
            <person name="Lawlor S."/>
            <person name="Leversha M."/>
            <person name="Lewis L."/>
            <person name="Liu W."/>
            <person name="Lloyd C."/>
            <person name="Lloyd D.M."/>
            <person name="Loulseged H."/>
            <person name="Loveland J.E."/>
            <person name="Lovell J.D."/>
            <person name="Lozado R."/>
            <person name="Lu J."/>
            <person name="Lyne R."/>
            <person name="Ma J."/>
            <person name="Maheshwari M."/>
            <person name="Matthews L.H."/>
            <person name="McDowall J."/>
            <person name="McLaren S."/>
            <person name="McMurray A."/>
            <person name="Meidl P."/>
            <person name="Meitinger T."/>
            <person name="Milne S."/>
            <person name="Miner G."/>
            <person name="Mistry S.L."/>
            <person name="Morgan M."/>
            <person name="Morris S."/>
            <person name="Mueller I."/>
            <person name="Mullikin J.C."/>
            <person name="Nguyen N."/>
            <person name="Nordsiek G."/>
            <person name="Nyakatura G."/>
            <person name="O'dell C.N."/>
            <person name="Okwuonu G."/>
            <person name="Palmer S."/>
            <person name="Pandian R."/>
            <person name="Parker D."/>
            <person name="Parrish J."/>
            <person name="Pasternak S."/>
            <person name="Patel D."/>
            <person name="Pearce A.V."/>
            <person name="Pearson D.M."/>
            <person name="Pelan S.E."/>
            <person name="Perez L."/>
            <person name="Porter K.M."/>
            <person name="Ramsey Y."/>
            <person name="Reichwald K."/>
            <person name="Rhodes S."/>
            <person name="Ridler K.A."/>
            <person name="Schlessinger D."/>
            <person name="Schueler M.G."/>
            <person name="Sehra H.K."/>
            <person name="Shaw-Smith C."/>
            <person name="Shen H."/>
            <person name="Sheridan E.M."/>
            <person name="Shownkeen R."/>
            <person name="Skuce C.D."/>
            <person name="Smith M.L."/>
            <person name="Sotheran E.C."/>
            <person name="Steingruber H.E."/>
            <person name="Steward C.A."/>
            <person name="Storey R."/>
            <person name="Swann R.M."/>
            <person name="Swarbreck D."/>
            <person name="Tabor P.E."/>
            <person name="Taudien S."/>
            <person name="Taylor T."/>
            <person name="Teague B."/>
            <person name="Thomas K."/>
            <person name="Thorpe A."/>
            <person name="Timms K."/>
            <person name="Tracey A."/>
            <person name="Trevanion S."/>
            <person name="Tromans A.C."/>
            <person name="d'Urso M."/>
            <person name="Verduzco D."/>
            <person name="Villasana D."/>
            <person name="Waldron L."/>
            <person name="Wall M."/>
            <person name="Wang Q."/>
            <person name="Warren J."/>
            <person name="Warry G.L."/>
            <person name="Wei X."/>
            <person name="West A."/>
            <person name="Whitehead S.L."/>
            <person name="Whiteley M.N."/>
            <person name="Wilkinson J.E."/>
            <person name="Willey D.L."/>
            <person name="Williams G."/>
            <person name="Williams L."/>
            <person name="Williamson A."/>
            <person name="Williamson H."/>
            <person name="Wilming L."/>
            <person name="Woodmansey R.L."/>
            <person name="Wray P.W."/>
            <person name="Yen J."/>
            <person name="Zhang J."/>
            <person name="Zhou J."/>
            <person name="Zoghbi H."/>
            <person name="Zorilla S."/>
            <person name="Buck D."/>
            <person name="Reinhardt R."/>
            <person name="Poustka A."/>
            <person name="Rosenthal A."/>
            <person name="Lehrach H."/>
            <person name="Meindl A."/>
            <person name="Minx P.J."/>
            <person name="Hillier L.W."/>
            <person name="Willard H.F."/>
            <person name="Wilson R.K."/>
            <person name="Waterston R.H."/>
            <person name="Rice C.M."/>
            <person name="Vaudin M."/>
            <person name="Coulson A."/>
            <person name="Nelson D.L."/>
            <person name="Weinstock G."/>
            <person name="Sulston J.E."/>
            <person name="Durbin R.M."/>
            <person name="Hubbard T."/>
            <person name="Gibbs R.A."/>
            <person name="Beck S."/>
            <person name="Rogers J."/>
            <person name="Bentley D.R."/>
        </authorList>
    </citation>
    <scope>NUCLEOTIDE SEQUENCE [LARGE SCALE GENOMIC DNA]</scope>
</reference>
<reference key="3">
    <citation type="journal article" date="2004" name="Genome Res.">
        <title>The status, quality, and expansion of the NIH full-length cDNA project: the Mammalian Gene Collection (MGC).</title>
        <authorList>
            <consortium name="The MGC Project Team"/>
        </authorList>
    </citation>
    <scope>NUCLEOTIDE SEQUENCE [LARGE SCALE MRNA] (ISOFORM 2)</scope>
    <source>
        <tissue>Brain</tissue>
    </source>
</reference>
<reference key="4">
    <citation type="journal article" date="1992" name="Proc. Natl. Acad. Sci. U.S.A.">
        <title>Isolation of a candidate gene for choroideremia.</title>
        <authorList>
            <person name="Merry D.E."/>
            <person name="Janne P.A."/>
            <person name="Landers J.E."/>
            <person name="Lewis R.A."/>
            <person name="Nussbaum R.L."/>
        </authorList>
    </citation>
    <scope>NUCLEOTIDE SEQUENCE [MRNA] OF 289-653 (ISOFORM 1)</scope>
    <source>
        <tissue>Retina</tissue>
    </source>
</reference>
<reference key="5">
    <citation type="journal article" date="1990" name="Nature">
        <title>Cloning of a gene that is rearranged in patients with choroideraemia.</title>
        <authorList>
            <person name="Cremers F.P.M."/>
            <person name="van de Pol D.J.R."/>
            <person name="van Kerkhoff L.P.M."/>
            <person name="Wieringa B."/>
            <person name="Ropers H.-H."/>
        </authorList>
    </citation>
    <scope>NUCLEOTIDE SEQUENCE [MRNA] OF 338-653 (ISOFORM 1)</scope>
</reference>
<reference key="6">
    <citation type="journal article" date="1992" name="Am. J. Hum. Genet.">
        <title>Detection and characterization of point mutations in the choroideremia candidate gene by PCR-SSCP analysis and direct DNA sequencing.</title>
        <authorList>
            <person name="van den Hurk J.A.J.M."/>
            <person name="van de Pol T.J.R."/>
            <person name="Molloy C.M."/>
            <person name="Brunsmann F."/>
            <person name="Ruther K."/>
            <person name="Zrenner E."/>
            <person name="Pinckers A.J.L.G."/>
            <person name="Pawlowitzki I.H."/>
            <person name="Bleeker-Wagemakers E.M."/>
            <person name="Wieringa B."/>
            <person name="Ropers H.-H."/>
            <person name="Cremers F.P.M."/>
        </authorList>
    </citation>
    <scope>NUCLEOTIDE SEQUENCE [GENOMIC DNA] OF 451-590</scope>
</reference>
<reference key="7">
    <citation type="journal article" date="1991" name="Nature">
        <title>Analysis of choroideraemia gene.</title>
        <authorList>
            <person name="Fodor E."/>
            <person name="Lee R.T."/>
            <person name="O'Donnell J.J."/>
        </authorList>
    </citation>
    <scope>SIMILARITY TO SMG P25A GDI</scope>
</reference>
<reference key="8">
    <citation type="journal article" date="1994" name="EMBO J.">
        <title>Rab escort protein-1 is a multifunctional protein that accompanies newly prenylated rab proteins to their target membranes.</title>
        <authorList>
            <person name="Alexandrov K."/>
            <person name="Horiuchi H."/>
            <person name="Steele-Mortimer O."/>
            <person name="Seabra M.C."/>
            <person name="Zerial M."/>
        </authorList>
    </citation>
    <scope>FUNCTION</scope>
    <scope>SUBUNIT</scope>
    <scope>SUBCELLULAR LOCATION</scope>
    <scope>INTERACTION WITH RAB5A AND RAB7A</scope>
</reference>
<reference key="9">
    <citation type="journal article" date="2008" name="Biochem. J.">
        <title>Rab geranylgeranylation occurs preferentially via the pre-formed REP-RGGT complex and is regulated by geranylgeranyl pyrophosphate.</title>
        <authorList>
            <person name="Baron R.A."/>
            <person name="Seabra M.C."/>
        </authorList>
    </citation>
    <scope>FUNCTION</scope>
    <scope>SUBUNIT</scope>
    <scope>MUTAGENESIS OF PHE-282 AND VAL-290</scope>
</reference>
<reference key="10">
    <citation type="journal article" date="2009" name="Anal. Chem.">
        <title>Lys-N and trypsin cover complementary parts of the phosphoproteome in a refined SCX-based approach.</title>
        <authorList>
            <person name="Gauci S."/>
            <person name="Helbig A.O."/>
            <person name="Slijper M."/>
            <person name="Krijgsveld J."/>
            <person name="Heck A.J."/>
            <person name="Mohammed S."/>
        </authorList>
    </citation>
    <scope>IDENTIFICATION BY MASS SPECTROMETRY [LARGE SCALE ANALYSIS]</scope>
</reference>
<reference key="11">
    <citation type="journal article" date="2011" name="Hum. Mutat.">
        <title>Comprehensive mutation analysis (20 families) of the choroideremia gene reveals a missense variant that prevents the binding of REP1 with rab geranylgeranyl transferase.</title>
        <authorList>
            <person name="Esposito G."/>
            <person name="De Falco F."/>
            <person name="Tinto N."/>
            <person name="Testa F."/>
            <person name="Vitagliano L."/>
            <person name="Tandurella I.C."/>
            <person name="Iannone L."/>
            <person name="Rossi S."/>
            <person name="Rinaldi E."/>
            <person name="Simonelli F."/>
            <person name="Zagari A."/>
            <person name="Salvatore F."/>
        </authorList>
    </citation>
    <scope>INTERACTION WITH RABGGTA</scope>
    <scope>VARIANT CHM ARG-507</scope>
    <scope>CHARACTERIZATION OF VARIANT CHM ARG-507</scope>
</reference>
<reference key="12">
    <citation type="journal article" date="2014" name="J. Proteomics">
        <title>An enzyme assisted RP-RPLC approach for in-depth analysis of human liver phosphoproteome.</title>
        <authorList>
            <person name="Bian Y."/>
            <person name="Song C."/>
            <person name="Cheng K."/>
            <person name="Dong M."/>
            <person name="Wang F."/>
            <person name="Huang J."/>
            <person name="Sun D."/>
            <person name="Wang L."/>
            <person name="Ye M."/>
            <person name="Zou H."/>
        </authorList>
    </citation>
    <scope>IDENTIFICATION BY MASS SPECTROMETRY [LARGE SCALE ANALYSIS]</scope>
    <source>
        <tissue>Liver</tissue>
    </source>
</reference>
<reference key="13">
    <citation type="journal article" date="2016" name="Elife">
        <title>Phosphoproteomics reveals that Parkinson's disease kinase LRRK2 regulates a subset of Rab GTPases.</title>
        <authorList>
            <person name="Steger M."/>
            <person name="Tonelli F."/>
            <person name="Ito G."/>
            <person name="Davies P."/>
            <person name="Trost M."/>
            <person name="Vetter M."/>
            <person name="Wachter S."/>
            <person name="Lorentzen E."/>
            <person name="Duddy G."/>
            <person name="Wilson S."/>
            <person name="Baptista M.A."/>
            <person name="Fiske B.K."/>
            <person name="Fell M.J."/>
            <person name="Morrow J.A."/>
            <person name="Reith A.D."/>
            <person name="Alessi D.R."/>
            <person name="Mann M."/>
        </authorList>
    </citation>
    <scope>IDENTIFICATION BY MASS SPECTROMETRY</scope>
    <scope>INTERACTION WITH RAB8A</scope>
</reference>
<reference key="14">
    <citation type="journal article" date="2017" name="Elife">
        <title>Systematic proteomic analysis of LRRK2-mediated Rab GTPase phosphorylation establishes a connection to ciliogenesis.</title>
        <authorList>
            <person name="Steger M."/>
            <person name="Diez F."/>
            <person name="Dhekne H.S."/>
            <person name="Lis P."/>
            <person name="Nirujogi R.S."/>
            <person name="Karayel O."/>
            <person name="Tonelli F."/>
            <person name="Martinez T.N."/>
            <person name="Lorentzen E."/>
            <person name="Pfeffer S.R."/>
            <person name="Alessi D.R."/>
            <person name="Mann M."/>
        </authorList>
    </citation>
    <scope>IDENTIFICATION BY MASS SPECTROMETRY</scope>
    <scope>INTERACTION WITH RAB3A; RAB3B; RAB3C; RAB3D; RAB5B; RAB5C; RAB8A; RAB8B; RAB10; RAB12; RAB35 AND RAB43</scope>
</reference>
<reference key="15">
    <citation type="journal article" date="1994" name="Hum. Mol. Genet.">
        <title>Missense mutation in the choroideremia gene.</title>
        <authorList>
            <person name="Donnelly P."/>
            <person name="Menet H."/>
            <person name="Fouanon C."/>
            <person name="Herbert O."/>
            <person name="Moisan J.P."/>
            <person name="Le Roux M.G."/>
            <person name="Pascal O."/>
        </authorList>
    </citation>
    <scope>VARIANT CHM LEU-471</scope>
</reference>
<reference key="16">
    <citation type="journal article" date="2009" name="Mutat. Res.">
        <title>The functional effect of pathogenic mutations in Rab escort protein 1.</title>
        <authorList>
            <person name="Sergeev Y.V."/>
            <person name="Smaoui N."/>
            <person name="Sui R."/>
            <person name="Stiles D."/>
            <person name="Gordiyenko N."/>
            <person name="Strunnikova N."/>
            <person name="Macdonald I.M."/>
        </authorList>
    </citation>
    <scope>VARIANT CHM PRO-550</scope>
</reference>
<organism>
    <name type="scientific">Homo sapiens</name>
    <name type="common">Human</name>
    <dbReference type="NCBI Taxonomy" id="9606"/>
    <lineage>
        <taxon>Eukaryota</taxon>
        <taxon>Metazoa</taxon>
        <taxon>Chordata</taxon>
        <taxon>Craniata</taxon>
        <taxon>Vertebrata</taxon>
        <taxon>Euteleostomi</taxon>
        <taxon>Mammalia</taxon>
        <taxon>Eutheria</taxon>
        <taxon>Euarchontoglires</taxon>
        <taxon>Primates</taxon>
        <taxon>Haplorrhini</taxon>
        <taxon>Catarrhini</taxon>
        <taxon>Hominidae</taxon>
        <taxon>Homo</taxon>
    </lineage>
</organism>
<dbReference type="EMBL" id="X78121">
    <property type="protein sequence ID" value="CAA55011.1"/>
    <property type="molecule type" value="mRNA"/>
</dbReference>
<dbReference type="EMBL" id="AL009175">
    <property type="status" value="NOT_ANNOTATED_CDS"/>
    <property type="molecule type" value="Genomic_DNA"/>
</dbReference>
<dbReference type="EMBL" id="AL022401">
    <property type="status" value="NOT_ANNOTATED_CDS"/>
    <property type="molecule type" value="Genomic_DNA"/>
</dbReference>
<dbReference type="EMBL" id="AL035451">
    <property type="status" value="NOT_ANNOTATED_CDS"/>
    <property type="molecule type" value="Genomic_DNA"/>
</dbReference>
<dbReference type="EMBL" id="AL138748">
    <property type="status" value="NOT_ANNOTATED_CDS"/>
    <property type="molecule type" value="Genomic_DNA"/>
</dbReference>
<dbReference type="EMBL" id="BC130494">
    <property type="protein sequence ID" value="AAI30495.1"/>
    <property type="molecule type" value="mRNA"/>
</dbReference>
<dbReference type="EMBL" id="BC130496">
    <property type="protein sequence ID" value="AAI30497.1"/>
    <property type="molecule type" value="mRNA"/>
</dbReference>
<dbReference type="EMBL" id="M83773">
    <property type="protein sequence ID" value="AAA61032.1"/>
    <property type="molecule type" value="mRNA"/>
</dbReference>
<dbReference type="EMBL" id="X57637">
    <property type="protein sequence ID" value="CAA40855.1"/>
    <property type="molecule type" value="mRNA"/>
</dbReference>
<dbReference type="EMBL" id="S37423">
    <property type="protein sequence ID" value="AAD13814.1"/>
    <property type="molecule type" value="Genomic_DNA"/>
</dbReference>
<dbReference type="EMBL" id="S37416">
    <property type="protein sequence ID" value="AAD13814.1"/>
    <property type="status" value="JOINED"/>
    <property type="molecule type" value="Genomic_DNA"/>
</dbReference>
<dbReference type="EMBL" id="S37417">
    <property type="protein sequence ID" value="AAD13814.1"/>
    <property type="status" value="JOINED"/>
    <property type="molecule type" value="Genomic_DNA"/>
</dbReference>
<dbReference type="EMBL" id="S37422">
    <property type="protein sequence ID" value="AAD13814.1"/>
    <property type="status" value="JOINED"/>
    <property type="molecule type" value="Genomic_DNA"/>
</dbReference>
<dbReference type="CCDS" id="CCDS14454.1">
    <molecule id="P24386-1"/>
</dbReference>
<dbReference type="CCDS" id="CCDS48139.1">
    <molecule id="P24386-2"/>
</dbReference>
<dbReference type="PIR" id="I37234">
    <property type="entry name" value="I37234"/>
</dbReference>
<dbReference type="RefSeq" id="NP_000381.1">
    <molecule id="P24386-1"/>
    <property type="nucleotide sequence ID" value="NM_000390.4"/>
</dbReference>
<dbReference type="RefSeq" id="NP_001138886.1">
    <molecule id="P24386-2"/>
    <property type="nucleotide sequence ID" value="NM_001145414.4"/>
</dbReference>
<dbReference type="RefSeq" id="NP_001307888.1">
    <property type="nucleotide sequence ID" value="NM_001320959.1"/>
</dbReference>
<dbReference type="SMR" id="P24386"/>
<dbReference type="BioGRID" id="107545">
    <property type="interactions" value="58"/>
</dbReference>
<dbReference type="CORUM" id="P24386"/>
<dbReference type="FunCoup" id="P24386">
    <property type="interactions" value="2334"/>
</dbReference>
<dbReference type="IntAct" id="P24386">
    <property type="interactions" value="87"/>
</dbReference>
<dbReference type="STRING" id="9606.ENSP00000350386"/>
<dbReference type="ChEMBL" id="CHEMBL5169124"/>
<dbReference type="GlyGen" id="P24386">
    <property type="glycosylation" value="1 site, 1 O-linked glycan (1 site)"/>
</dbReference>
<dbReference type="iPTMnet" id="P24386"/>
<dbReference type="PhosphoSitePlus" id="P24386"/>
<dbReference type="SwissPalm" id="P24386"/>
<dbReference type="BioMuta" id="CHM"/>
<dbReference type="DMDM" id="21431807"/>
<dbReference type="jPOST" id="P24386"/>
<dbReference type="MassIVE" id="P24386"/>
<dbReference type="PaxDb" id="9606-ENSP00000350386"/>
<dbReference type="PeptideAtlas" id="P24386"/>
<dbReference type="ProteomicsDB" id="54199">
    <molecule id="P24386-1"/>
</dbReference>
<dbReference type="ProteomicsDB" id="54200">
    <molecule id="P24386-2"/>
</dbReference>
<dbReference type="Pumba" id="P24386"/>
<dbReference type="Antibodypedia" id="492">
    <property type="antibodies" value="167 antibodies from 31 providers"/>
</dbReference>
<dbReference type="DNASU" id="1121"/>
<dbReference type="Ensembl" id="ENST00000357749.7">
    <molecule id="P24386-1"/>
    <property type="protein sequence ID" value="ENSP00000350386.2"/>
    <property type="gene ID" value="ENSG00000188419.14"/>
</dbReference>
<dbReference type="Ensembl" id="ENST00000615443.1">
    <molecule id="P24386-2"/>
    <property type="protein sequence ID" value="ENSP00000484306.1"/>
    <property type="gene ID" value="ENSG00000188419.14"/>
</dbReference>
<dbReference type="GeneID" id="1121"/>
<dbReference type="KEGG" id="hsa:1121"/>
<dbReference type="MANE-Select" id="ENST00000357749.7">
    <property type="protein sequence ID" value="ENSP00000350386.2"/>
    <property type="RefSeq nucleotide sequence ID" value="NM_000390.4"/>
    <property type="RefSeq protein sequence ID" value="NP_000381.1"/>
</dbReference>
<dbReference type="UCSC" id="uc004eet.3">
    <molecule id="P24386-1"/>
    <property type="organism name" value="human"/>
</dbReference>
<dbReference type="AGR" id="HGNC:1940"/>
<dbReference type="CTD" id="1121"/>
<dbReference type="DisGeNET" id="1121"/>
<dbReference type="GeneCards" id="CHM"/>
<dbReference type="GeneReviews" id="CHM"/>
<dbReference type="HGNC" id="HGNC:1940">
    <property type="gene designation" value="CHM"/>
</dbReference>
<dbReference type="HPA" id="ENSG00000188419">
    <property type="expression patterns" value="Low tissue specificity"/>
</dbReference>
<dbReference type="MalaCards" id="CHM"/>
<dbReference type="MIM" id="300390">
    <property type="type" value="gene"/>
</dbReference>
<dbReference type="MIM" id="303100">
    <property type="type" value="phenotype"/>
</dbReference>
<dbReference type="neXtProt" id="NX_P24386"/>
<dbReference type="OpenTargets" id="ENSG00000188419"/>
<dbReference type="Orphanet" id="180">
    <property type="disease" value="Choroideremia"/>
</dbReference>
<dbReference type="PharmGKB" id="PA26471"/>
<dbReference type="VEuPathDB" id="HostDB:ENSG00000188419"/>
<dbReference type="eggNOG" id="KOG4405">
    <property type="taxonomic scope" value="Eukaryota"/>
</dbReference>
<dbReference type="GeneTree" id="ENSGT00950000182994"/>
<dbReference type="HOGENOM" id="CLU_021695_4_1_1"/>
<dbReference type="InParanoid" id="P24386"/>
<dbReference type="OMA" id="EHYVLHA"/>
<dbReference type="OrthoDB" id="1923006at2759"/>
<dbReference type="PAN-GO" id="P24386">
    <property type="GO annotations" value="6 GO annotations based on evolutionary models"/>
</dbReference>
<dbReference type="PhylomeDB" id="P24386"/>
<dbReference type="TreeFam" id="TF320813"/>
<dbReference type="BRENDA" id="2.5.1.60">
    <property type="organism ID" value="2681"/>
</dbReference>
<dbReference type="PathwayCommons" id="P24386"/>
<dbReference type="Reactome" id="R-HSA-6803205">
    <property type="pathway name" value="TP53 regulates transcription of several additional cell death genes whose specific roles in p53-dependent apoptosis remain uncertain"/>
</dbReference>
<dbReference type="Reactome" id="R-HSA-8873719">
    <property type="pathway name" value="RAB geranylgeranylation"/>
</dbReference>
<dbReference type="Reactome" id="R-HSA-8876198">
    <property type="pathway name" value="RAB GEFs exchange GTP for GDP on RABs"/>
</dbReference>
<dbReference type="SignaLink" id="P24386"/>
<dbReference type="SIGNOR" id="P24386"/>
<dbReference type="BioGRID-ORCS" id="1121">
    <property type="hits" value="14 hits in 778 CRISPR screens"/>
</dbReference>
<dbReference type="ChiTaRS" id="CHM">
    <property type="organism name" value="human"/>
</dbReference>
<dbReference type="GeneWiki" id="Rab_escort_protein"/>
<dbReference type="GenomeRNAi" id="1121"/>
<dbReference type="Pharos" id="P24386">
    <property type="development level" value="Tbio"/>
</dbReference>
<dbReference type="PRO" id="PR:P24386"/>
<dbReference type="Proteomes" id="UP000005640">
    <property type="component" value="Chromosome X"/>
</dbReference>
<dbReference type="RNAct" id="P24386">
    <property type="molecule type" value="protein"/>
</dbReference>
<dbReference type="Bgee" id="ENSG00000188419">
    <property type="expression patterns" value="Expressed in endothelial cell and 182 other cell types or tissues"/>
</dbReference>
<dbReference type="GO" id="GO:0005829">
    <property type="term" value="C:cytosol"/>
    <property type="evidence" value="ECO:0000315"/>
    <property type="project" value="UniProtKB"/>
</dbReference>
<dbReference type="GO" id="GO:0005634">
    <property type="term" value="C:nucleus"/>
    <property type="evidence" value="ECO:0000318"/>
    <property type="project" value="GO_Central"/>
</dbReference>
<dbReference type="GO" id="GO:0005968">
    <property type="term" value="C:Rab-protein geranylgeranyltransferase complex"/>
    <property type="evidence" value="ECO:0000314"/>
    <property type="project" value="UniProtKB"/>
</dbReference>
<dbReference type="GO" id="GO:0005092">
    <property type="term" value="F:GDP-dissociation inhibitor activity"/>
    <property type="evidence" value="ECO:0007669"/>
    <property type="project" value="InterPro"/>
</dbReference>
<dbReference type="GO" id="GO:0005096">
    <property type="term" value="F:GTPase activator activity"/>
    <property type="evidence" value="ECO:0007669"/>
    <property type="project" value="UniProtKB-KW"/>
</dbReference>
<dbReference type="GO" id="GO:0004663">
    <property type="term" value="F:Rab geranylgeranyltransferase activity"/>
    <property type="evidence" value="ECO:0000304"/>
    <property type="project" value="ProtInc"/>
</dbReference>
<dbReference type="GO" id="GO:0031267">
    <property type="term" value="F:small GTPase binding"/>
    <property type="evidence" value="ECO:0000314"/>
    <property type="project" value="UniProtKB"/>
</dbReference>
<dbReference type="GO" id="GO:0006886">
    <property type="term" value="P:intracellular protein transport"/>
    <property type="evidence" value="ECO:0007669"/>
    <property type="project" value="InterPro"/>
</dbReference>
<dbReference type="GO" id="GO:0018344">
    <property type="term" value="P:protein geranylgeranylation"/>
    <property type="evidence" value="ECO:0000314"/>
    <property type="project" value="UniProtKB"/>
</dbReference>
<dbReference type="GO" id="GO:0006612">
    <property type="term" value="P:protein targeting to membrane"/>
    <property type="evidence" value="ECO:0000315"/>
    <property type="project" value="UniProtKB"/>
</dbReference>
<dbReference type="GO" id="GO:0007264">
    <property type="term" value="P:small GTPase-mediated signal transduction"/>
    <property type="evidence" value="ECO:0007669"/>
    <property type="project" value="InterPro"/>
</dbReference>
<dbReference type="GO" id="GO:0016192">
    <property type="term" value="P:vesicle-mediated transport"/>
    <property type="evidence" value="ECO:0000318"/>
    <property type="project" value="GO_Central"/>
</dbReference>
<dbReference type="GO" id="GO:0007601">
    <property type="term" value="P:visual perception"/>
    <property type="evidence" value="ECO:0000304"/>
    <property type="project" value="ProtInc"/>
</dbReference>
<dbReference type="FunFam" id="1.10.405.10:FF:000003">
    <property type="entry name" value="Rab proteins geranylgeranyltransferase component A"/>
    <property type="match status" value="1"/>
</dbReference>
<dbReference type="FunFam" id="3.30.519.10:FF:000007">
    <property type="entry name" value="Rab proteins geranylgeranyltransferase component A"/>
    <property type="match status" value="1"/>
</dbReference>
<dbReference type="FunFam" id="3.50.50.60:FF:000108">
    <property type="entry name" value="Rab proteins geranylgeranyltransferase component A"/>
    <property type="match status" value="1"/>
</dbReference>
<dbReference type="Gene3D" id="3.50.50.60">
    <property type="entry name" value="FAD/NAD(P)-binding domain"/>
    <property type="match status" value="2"/>
</dbReference>
<dbReference type="Gene3D" id="1.10.405.10">
    <property type="entry name" value="Guanine Nucleotide Dissociation Inhibitor, domain 1"/>
    <property type="match status" value="1"/>
</dbReference>
<dbReference type="Gene3D" id="3.30.519.10">
    <property type="entry name" value="Guanine Nucleotide Dissociation Inhibitor, domain 2"/>
    <property type="match status" value="2"/>
</dbReference>
<dbReference type="InterPro" id="IPR036188">
    <property type="entry name" value="FAD/NAD-bd_sf"/>
</dbReference>
<dbReference type="InterPro" id="IPR018203">
    <property type="entry name" value="GDP_dissociation_inhibitor"/>
</dbReference>
<dbReference type="InterPro" id="IPR001738">
    <property type="entry name" value="Rab_escort"/>
</dbReference>
<dbReference type="InterPro" id="IPR054420">
    <property type="entry name" value="RAE1_2_domI_C"/>
</dbReference>
<dbReference type="PANTHER" id="PTHR11787">
    <property type="entry name" value="RAB GDP-DISSOCIATION INHIBITOR"/>
    <property type="match status" value="1"/>
</dbReference>
<dbReference type="PANTHER" id="PTHR11787:SF12">
    <property type="entry name" value="RAB PROTEINS GERANYLGERANYLTRANSFERASE COMPONENT A 1"/>
    <property type="match status" value="1"/>
</dbReference>
<dbReference type="Pfam" id="PF00996">
    <property type="entry name" value="GDI"/>
    <property type="match status" value="1"/>
</dbReference>
<dbReference type="Pfam" id="PF22603">
    <property type="entry name" value="RAE1_2_domI_C"/>
    <property type="match status" value="1"/>
</dbReference>
<dbReference type="PIRSF" id="PIRSF016550">
    <property type="entry name" value="Rab_ger_ger_transf_A_euk"/>
    <property type="match status" value="1"/>
</dbReference>
<dbReference type="PRINTS" id="PR00893">
    <property type="entry name" value="RABESCORT"/>
</dbReference>
<dbReference type="PRINTS" id="PR00891">
    <property type="entry name" value="RABGDIREP"/>
</dbReference>
<dbReference type="SUPFAM" id="SSF54373">
    <property type="entry name" value="FAD-linked reductases, C-terminal domain"/>
    <property type="match status" value="1"/>
</dbReference>
<dbReference type="SUPFAM" id="SSF51905">
    <property type="entry name" value="FAD/NAD(P)-binding domain"/>
    <property type="match status" value="1"/>
</dbReference>
<sequence length="653" mass="73476">MADTLPSEFDVIVIGTGLPESIIAAACSRSGRRVLHVDSRSYYGGNWASFSFSGLLSWLKEYQENSDIVSDSPVWQDQILENEEAIALSRKDKTIQHVEVFCYASQDLHEDVEEAGALQKNHALVTSANSTEAADSAFLPTEDESLSTMSCEMLTEQTPSSDPENALEVNGAEVTGEKENHCDDKTCVPSTSAEDMSENVPIAEDTTEQPKKNRITYSQIIKEGRRFNIDLVSKLLYSRGLLIDLLIKSNVSRYAEFKNITRILAFREGRVEQVPCSRADVFNSKQLTMVEKRMLMKFLTFCMEYEKYPDEYKGYEEITFYEYLKTQKLTPNLQYIVMHSIAMTSETASSTIDGLKATKNFLHCLGRYGNTPFLFPLYGQGELPQCFCRMCAVFGGIYCLRHSVQCLVVDKESRKCKAIIDQFGQRIISEHFLVEDSYFPENMCSRVQYRQISRAVLITDRSVLKTDSDQQISILTVPAEEPGTFAVRVIELCSSTMTCMKGTYLVHLTCTSSKTAREDLESVVQKLFVPYTEMEIENEQVEKPRILWALYFNMRDSSDISRSCYNDLPSNVYVCSGPDCGLGNDNAVKQAETLFQEICPNEDFCPPPPNPEDIILDGDSLQPEASESSAIPEANSETFKESTNLGNLEESSE</sequence>